<accession>A1T7Z4</accession>
<evidence type="ECO:0000255" key="1">
    <source>
        <dbReference type="HAMAP-Rule" id="MF_00218"/>
    </source>
</evidence>
<name>DCUP_MYCVP</name>
<comment type="function">
    <text evidence="1">Catalyzes the decarboxylation of four acetate groups of uroporphyrinogen-III to yield coproporphyrinogen-III.</text>
</comment>
<comment type="catalytic activity">
    <reaction evidence="1">
        <text>uroporphyrinogen III + 4 H(+) = coproporphyrinogen III + 4 CO2</text>
        <dbReference type="Rhea" id="RHEA:19865"/>
        <dbReference type="ChEBI" id="CHEBI:15378"/>
        <dbReference type="ChEBI" id="CHEBI:16526"/>
        <dbReference type="ChEBI" id="CHEBI:57308"/>
        <dbReference type="ChEBI" id="CHEBI:57309"/>
        <dbReference type="EC" id="4.1.1.37"/>
    </reaction>
</comment>
<comment type="pathway">
    <text evidence="1">Porphyrin-containing compound metabolism; protoporphyrin-IX biosynthesis; coproporphyrinogen-III from 5-aminolevulinate: step 4/4.</text>
</comment>
<comment type="subunit">
    <text evidence="1">Homodimer.</text>
</comment>
<comment type="subcellular location">
    <subcellularLocation>
        <location evidence="1">Cytoplasm</location>
    </subcellularLocation>
</comment>
<comment type="similarity">
    <text evidence="1">Belongs to the uroporphyrinogen decarboxylase family.</text>
</comment>
<proteinExistence type="inferred from homology"/>
<keyword id="KW-0963">Cytoplasm</keyword>
<keyword id="KW-0210">Decarboxylase</keyword>
<keyword id="KW-0456">Lyase</keyword>
<keyword id="KW-0627">Porphyrin biosynthesis</keyword>
<reference key="1">
    <citation type="submission" date="2006-12" db="EMBL/GenBank/DDBJ databases">
        <title>Complete sequence of Mycobacterium vanbaalenii PYR-1.</title>
        <authorList>
            <consortium name="US DOE Joint Genome Institute"/>
            <person name="Copeland A."/>
            <person name="Lucas S."/>
            <person name="Lapidus A."/>
            <person name="Barry K."/>
            <person name="Detter J.C."/>
            <person name="Glavina del Rio T."/>
            <person name="Hammon N."/>
            <person name="Israni S."/>
            <person name="Dalin E."/>
            <person name="Tice H."/>
            <person name="Pitluck S."/>
            <person name="Singan V."/>
            <person name="Schmutz J."/>
            <person name="Larimer F."/>
            <person name="Land M."/>
            <person name="Hauser L."/>
            <person name="Kyrpides N."/>
            <person name="Anderson I.J."/>
            <person name="Miller C."/>
            <person name="Richardson P."/>
        </authorList>
    </citation>
    <scope>NUCLEOTIDE SEQUENCE [LARGE SCALE GENOMIC DNA]</scope>
    <source>
        <strain>DSM 7251 / JCM 13017 / BCRC 16820 / KCTC 9966 / NRRL B-24157 / PYR-1</strain>
    </source>
</reference>
<organism>
    <name type="scientific">Mycolicibacterium vanbaalenii (strain DSM 7251 / JCM 13017 / BCRC 16820 / KCTC 9966 / NRRL B-24157 / PYR-1)</name>
    <name type="common">Mycobacterium vanbaalenii</name>
    <dbReference type="NCBI Taxonomy" id="350058"/>
    <lineage>
        <taxon>Bacteria</taxon>
        <taxon>Bacillati</taxon>
        <taxon>Actinomycetota</taxon>
        <taxon>Actinomycetes</taxon>
        <taxon>Mycobacteriales</taxon>
        <taxon>Mycobacteriaceae</taxon>
        <taxon>Mycolicibacterium</taxon>
    </lineage>
</organism>
<feature type="chain" id="PRO_1000023926" description="Uroporphyrinogen decarboxylase">
    <location>
        <begin position="1"/>
        <end position="354"/>
    </location>
</feature>
<feature type="binding site" evidence="1">
    <location>
        <begin position="30"/>
        <end position="34"/>
    </location>
    <ligand>
        <name>substrate</name>
    </ligand>
</feature>
<feature type="binding site" evidence="1">
    <location>
        <position position="79"/>
    </location>
    <ligand>
        <name>substrate</name>
    </ligand>
</feature>
<feature type="binding site" evidence="1">
    <location>
        <position position="154"/>
    </location>
    <ligand>
        <name>substrate</name>
    </ligand>
</feature>
<feature type="binding site" evidence="1">
    <location>
        <position position="209"/>
    </location>
    <ligand>
        <name>substrate</name>
    </ligand>
</feature>
<feature type="binding site" evidence="1">
    <location>
        <position position="333"/>
    </location>
    <ligand>
        <name>substrate</name>
    </ligand>
</feature>
<feature type="site" description="Transition state stabilizer" evidence="1">
    <location>
        <position position="79"/>
    </location>
</feature>
<gene>
    <name evidence="1" type="primary">hemE</name>
    <name type="ordered locus">Mvan_2481</name>
</gene>
<sequence length="354" mass="37468">MNTRRELPESPYLAAVAGRKPLRVPVWMMRQAGRSLPEYRALRAKNTMMQACFDADLITEITLQPVRRHGVDAAILFSDIVVPLRAAGIDLDIVPDVGPVIAQPVRTADDVAAIRPLEPSRVDPVATAIGRLVGELGDVPLIGFAGAPFTLASYLVEGGPSRNHERTKAMMLGETATWHALMTALTDITIAFLRAQVDAGVDAIQVFDSWAGTLSLADYRTYVLPHSARVFASLAGAGVPMTHFGVGTAELLGAMSEAVTGHGVPAMVGVDWRTSLTDAAARVRPGTALQGNLDPVVLLAGWPVVERAVRAVVEDGRRAVDAGAVGHVFNLGHGVLPATDPAVITDTVALVHEL</sequence>
<dbReference type="EC" id="4.1.1.37" evidence="1"/>
<dbReference type="EMBL" id="CP000511">
    <property type="protein sequence ID" value="ABM13294.1"/>
    <property type="molecule type" value="Genomic_DNA"/>
</dbReference>
<dbReference type="RefSeq" id="WP_011779706.1">
    <property type="nucleotide sequence ID" value="NZ_JACKSD010000077.1"/>
</dbReference>
<dbReference type="SMR" id="A1T7Z4"/>
<dbReference type="STRING" id="350058.Mvan_2481"/>
<dbReference type="KEGG" id="mva:Mvan_2481"/>
<dbReference type="eggNOG" id="COG0407">
    <property type="taxonomic scope" value="Bacteria"/>
</dbReference>
<dbReference type="HOGENOM" id="CLU_040933_0_1_11"/>
<dbReference type="UniPathway" id="UPA00251">
    <property type="reaction ID" value="UER00321"/>
</dbReference>
<dbReference type="Proteomes" id="UP000009159">
    <property type="component" value="Chromosome"/>
</dbReference>
<dbReference type="GO" id="GO:0005829">
    <property type="term" value="C:cytosol"/>
    <property type="evidence" value="ECO:0007669"/>
    <property type="project" value="TreeGrafter"/>
</dbReference>
<dbReference type="GO" id="GO:0004853">
    <property type="term" value="F:uroporphyrinogen decarboxylase activity"/>
    <property type="evidence" value="ECO:0007669"/>
    <property type="project" value="UniProtKB-UniRule"/>
</dbReference>
<dbReference type="GO" id="GO:0006782">
    <property type="term" value="P:protoporphyrinogen IX biosynthetic process"/>
    <property type="evidence" value="ECO:0007669"/>
    <property type="project" value="UniProtKB-UniRule"/>
</dbReference>
<dbReference type="CDD" id="cd00717">
    <property type="entry name" value="URO-D"/>
    <property type="match status" value="1"/>
</dbReference>
<dbReference type="Gene3D" id="3.20.20.210">
    <property type="match status" value="1"/>
</dbReference>
<dbReference type="HAMAP" id="MF_00218">
    <property type="entry name" value="URO_D"/>
    <property type="match status" value="1"/>
</dbReference>
<dbReference type="InterPro" id="IPR038071">
    <property type="entry name" value="UROD/MetE-like_sf"/>
</dbReference>
<dbReference type="InterPro" id="IPR006361">
    <property type="entry name" value="Uroporphyrinogen_deCO2ase_HemE"/>
</dbReference>
<dbReference type="InterPro" id="IPR000257">
    <property type="entry name" value="Uroporphyrinogen_deCOase"/>
</dbReference>
<dbReference type="NCBIfam" id="TIGR01464">
    <property type="entry name" value="hemE"/>
    <property type="match status" value="1"/>
</dbReference>
<dbReference type="PANTHER" id="PTHR21091">
    <property type="entry name" value="METHYLTETRAHYDROFOLATE:HOMOCYSTEINE METHYLTRANSFERASE RELATED"/>
    <property type="match status" value="1"/>
</dbReference>
<dbReference type="PANTHER" id="PTHR21091:SF169">
    <property type="entry name" value="UROPORPHYRINOGEN DECARBOXYLASE"/>
    <property type="match status" value="1"/>
</dbReference>
<dbReference type="Pfam" id="PF01208">
    <property type="entry name" value="URO-D"/>
    <property type="match status" value="1"/>
</dbReference>
<dbReference type="SUPFAM" id="SSF51726">
    <property type="entry name" value="UROD/MetE-like"/>
    <property type="match status" value="1"/>
</dbReference>
<dbReference type="PROSITE" id="PS00906">
    <property type="entry name" value="UROD_1"/>
    <property type="match status" value="1"/>
</dbReference>
<dbReference type="PROSITE" id="PS00907">
    <property type="entry name" value="UROD_2"/>
    <property type="match status" value="1"/>
</dbReference>
<protein>
    <recommendedName>
        <fullName evidence="1">Uroporphyrinogen decarboxylase</fullName>
        <shortName evidence="1">UPD</shortName>
        <shortName evidence="1">URO-D</shortName>
        <ecNumber evidence="1">4.1.1.37</ecNumber>
    </recommendedName>
</protein>